<organismHost>
    <name type="scientific">Homo sapiens</name>
    <name type="common">Human</name>
    <dbReference type="NCBI Taxonomy" id="9606"/>
</organismHost>
<organismHost>
    <name type="scientific">Myodes glareolus</name>
    <name type="common">Bank vole</name>
    <name type="synonym">Clethrionomys glareolus</name>
    <dbReference type="NCBI Taxonomy" id="447135"/>
</organismHost>
<feature type="chain" id="PRO_0000423150" description="Non-structural protein NS-S">
    <location>
        <begin position="1"/>
        <end position="90"/>
    </location>
</feature>
<organism>
    <name type="scientific">Puumala virus (strain Sotkamo/V-2969/81)</name>
    <dbReference type="NCBI Taxonomy" id="39002"/>
    <lineage>
        <taxon>Viruses</taxon>
        <taxon>Riboviria</taxon>
        <taxon>Orthornavirae</taxon>
        <taxon>Negarnaviricota</taxon>
        <taxon>Polyploviricotina</taxon>
        <taxon>Ellioviricetes</taxon>
        <taxon>Bunyavirales</taxon>
        <taxon>Hantaviridae</taxon>
        <taxon>Mammantavirinae</taxon>
        <taxon>Orthohantavirus</taxon>
        <taxon>Orthohantavirus puumalaense</taxon>
    </lineage>
</organism>
<keyword id="KW-1035">Host cytoplasm</keyword>
<keyword id="KW-0945">Host-virus interaction</keyword>
<keyword id="KW-1090">Inhibition of host innate immune response by virus</keyword>
<keyword id="KW-1113">Inhibition of host RLR pathway by virus</keyword>
<keyword id="KW-1185">Reference proteome</keyword>
<keyword id="KW-0899">Viral immunoevasion</keyword>
<gene>
    <name type="primary">N</name>
</gene>
<dbReference type="EMBL" id="X61035">
    <property type="status" value="NOT_ANNOTATED_CDS"/>
    <property type="molecule type" value="Genomic_RNA"/>
</dbReference>
<dbReference type="EMBL" id="HE801633">
    <property type="protein sequence ID" value="CCH22847.1"/>
    <property type="molecule type" value="Genomic_RNA"/>
</dbReference>
<dbReference type="RefSeq" id="YP_004928150.1">
    <property type="nucleotide sequence ID" value="NC_005224.1"/>
</dbReference>
<dbReference type="KEGG" id="vg:11293625"/>
<dbReference type="Proteomes" id="UP000008482">
    <property type="component" value="Genome"/>
</dbReference>
<dbReference type="Proteomes" id="UP000110237">
    <property type="component" value="Genome"/>
</dbReference>
<dbReference type="GO" id="GO:0044220">
    <property type="term" value="C:host cell perinuclear region of cytoplasm"/>
    <property type="evidence" value="ECO:0007669"/>
    <property type="project" value="UniProtKB-SubCell"/>
</dbReference>
<dbReference type="GO" id="GO:0039536">
    <property type="term" value="P:negative regulation of RIG-I signaling pathway"/>
    <property type="evidence" value="ECO:0000314"/>
    <property type="project" value="UniProtKB"/>
</dbReference>
<dbReference type="GO" id="GO:0052170">
    <property type="term" value="P:symbiont-mediated suppression of host innate immune response"/>
    <property type="evidence" value="ECO:0007669"/>
    <property type="project" value="UniProtKB-KW"/>
</dbReference>
<evidence type="ECO:0000250" key="1">
    <source>
        <dbReference type="UniProtKB" id="P0DTK1"/>
    </source>
</evidence>
<evidence type="ECO:0000250" key="2">
    <source>
        <dbReference type="UniProtKB" id="Q80DP8"/>
    </source>
</evidence>
<evidence type="ECO:0000269" key="3">
    <source>
    </source>
</evidence>
<evidence type="ECO:0000269" key="4">
    <source>
    </source>
</evidence>
<evidence type="ECO:0000305" key="5"/>
<sequence length="90" mass="10731">MNSNLLLPDKNLRMQREQWKWTQMTLIKTHCKPGNKQCQHWRTNSQTTREGWQMLCPGKKWILNLLTRLGLNLMTTSRRDQALGMEMSLM</sequence>
<protein>
    <recommendedName>
        <fullName>Non-structural protein NS-S</fullName>
        <shortName>NSs</shortName>
    </recommendedName>
</protein>
<comment type="function">
    <text evidence="3 4">Antagonizes host type-I IFN signaling pathway.</text>
</comment>
<comment type="subcellular location">
    <subcellularLocation>
        <location evidence="1">Host cytoplasm</location>
        <location evidence="1">Host perinuclear region</location>
    </subcellularLocation>
    <subcellularLocation>
        <location evidence="4">Host cytoplasm</location>
    </subcellularLocation>
</comment>
<comment type="miscellaneous">
    <text evidence="2">Expressed from the S segment by a leaky scanning mechanism.</text>
</comment>
<comment type="similarity">
    <text evidence="5">Belongs to the hantavirus NS-S protein family.</text>
</comment>
<proteinExistence type="inferred from homology"/>
<name>NSS_PUUMS</name>
<accession>I4EPA3</accession>
<reference key="1">
    <citation type="journal article" date="1992" name="J. Gen. Virol.">
        <title>Cloning and sequencing of Puumala virus Sotkamo strain S and M RNA segments: evidence for strain variation in hantaviruses and expression of the nucleocapsid protein.</title>
        <authorList>
            <person name="Vapalahti O.P."/>
            <person name="Kallio-Kokko H."/>
            <person name="Salonen E.M."/>
            <person name="Brummer-Korvenkontio M."/>
            <person name="Vaheri A."/>
        </authorList>
    </citation>
    <scope>NUCLEOTIDE SEQUENCE [GENOMIC RNA]</scope>
</reference>
<reference key="2">
    <citation type="journal article" date="2012" name="Virus Genes">
        <title>Resequencing of the Puumala virus strain Sotkamo from the WHO Arbovirus collection.</title>
        <authorList>
            <person name="Kurolt I.C."/>
            <person name="Paessler S."/>
            <person name="Markotic A."/>
        </authorList>
    </citation>
    <scope>NUCLEOTIDE SEQUENCE [GENOMIC RNA]</scope>
    <source>
        <strain>Isolate Sotkamo 2009/WHO Arbovirus collection</strain>
    </source>
</reference>
<reference key="3">
    <citation type="journal article" date="2007" name="J. Med. Virol.">
        <title>Tula and Puumala hantavirus NSs ORFs are functional and the products inhibit activation of the interferon-beta promoter.</title>
        <authorList>
            <person name="Jaaskelainen K.M."/>
            <person name="Kaukinen P."/>
            <person name="Minskaya E.S."/>
            <person name="Plyusnina A."/>
            <person name="Vapalahti O."/>
            <person name="Elliott R.M."/>
            <person name="Weber F."/>
            <person name="Vaheri A."/>
            <person name="Plyusnin A."/>
        </authorList>
    </citation>
    <scope>FUNCTION</scope>
    <scope>IDENTIFICATION</scope>
</reference>
<reference key="4">
    <citation type="journal article" date="2021" name="Viruses">
        <title>Interactions of Viral Proteins from Pathogenic and Low or Non-Pathogenic Orthohantaviruses with Human Type I Interferon Signaling.</title>
        <authorList>
            <person name="Gallo G."/>
            <person name="Caignard G."/>
            <person name="Badonnel K."/>
            <person name="Chevreux G."/>
            <person name="Terrier S."/>
            <person name="Szemiel A."/>
            <person name="Roman-Sosa G."/>
            <person name="Binder F."/>
            <person name="Gu Q."/>
            <person name="Da Silva Filipe A."/>
            <person name="Ulrich R.G."/>
            <person name="Kohl A."/>
            <person name="Vitour D."/>
            <person name="Tordo N."/>
            <person name="Ermonval M."/>
        </authorList>
    </citation>
    <scope>FUNCTION</scope>
    <scope>SUBCELLULAR LOCATION</scope>
</reference>